<gene>
    <name evidence="1" type="primary">ubiD</name>
    <name type="ordered locus">lpg2933</name>
</gene>
<name>UBID_LEGPH</name>
<dbReference type="EC" id="4.1.1.98" evidence="1"/>
<dbReference type="EMBL" id="AE017354">
    <property type="protein sequence ID" value="AAU28979.1"/>
    <property type="molecule type" value="Genomic_DNA"/>
</dbReference>
<dbReference type="RefSeq" id="WP_010948618.1">
    <property type="nucleotide sequence ID" value="NC_002942.5"/>
</dbReference>
<dbReference type="RefSeq" id="YP_096926.1">
    <property type="nucleotide sequence ID" value="NC_002942.5"/>
</dbReference>
<dbReference type="SMR" id="Q5ZRE9"/>
<dbReference type="STRING" id="272624.lpg2933"/>
<dbReference type="PaxDb" id="272624-lpg2933"/>
<dbReference type="GeneID" id="57036937"/>
<dbReference type="KEGG" id="lpn:lpg2933"/>
<dbReference type="PATRIC" id="fig|272624.6.peg.3132"/>
<dbReference type="eggNOG" id="COG0043">
    <property type="taxonomic scope" value="Bacteria"/>
</dbReference>
<dbReference type="HOGENOM" id="CLU_023348_4_1_6"/>
<dbReference type="OrthoDB" id="9809841at2"/>
<dbReference type="UniPathway" id="UPA00232"/>
<dbReference type="Proteomes" id="UP000000609">
    <property type="component" value="Chromosome"/>
</dbReference>
<dbReference type="GO" id="GO:0005829">
    <property type="term" value="C:cytosol"/>
    <property type="evidence" value="ECO:0007669"/>
    <property type="project" value="TreeGrafter"/>
</dbReference>
<dbReference type="GO" id="GO:0005886">
    <property type="term" value="C:plasma membrane"/>
    <property type="evidence" value="ECO:0007669"/>
    <property type="project" value="UniProtKB-SubCell"/>
</dbReference>
<dbReference type="GO" id="GO:0008694">
    <property type="term" value="F:3-octaprenyl-4-hydroxybenzoate carboxy-lyase activity"/>
    <property type="evidence" value="ECO:0007669"/>
    <property type="project" value="UniProtKB-UniRule"/>
</dbReference>
<dbReference type="GO" id="GO:0046872">
    <property type="term" value="F:metal ion binding"/>
    <property type="evidence" value="ECO:0007669"/>
    <property type="project" value="UniProtKB-KW"/>
</dbReference>
<dbReference type="GO" id="GO:0006744">
    <property type="term" value="P:ubiquinone biosynthetic process"/>
    <property type="evidence" value="ECO:0007669"/>
    <property type="project" value="UniProtKB-UniRule"/>
</dbReference>
<dbReference type="FunFam" id="3.40.1670.10:FF:000001">
    <property type="entry name" value="3-octaprenyl-4-hydroxybenzoate carboxy-lyase"/>
    <property type="match status" value="1"/>
</dbReference>
<dbReference type="Gene3D" id="1.20.5.570">
    <property type="entry name" value="Single helix bin"/>
    <property type="match status" value="1"/>
</dbReference>
<dbReference type="Gene3D" id="3.40.1670.10">
    <property type="entry name" value="UbiD C-terminal domain-like"/>
    <property type="match status" value="1"/>
</dbReference>
<dbReference type="HAMAP" id="MF_01636">
    <property type="entry name" value="UbiD"/>
    <property type="match status" value="1"/>
</dbReference>
<dbReference type="InterPro" id="IPR002830">
    <property type="entry name" value="UbiD"/>
</dbReference>
<dbReference type="InterPro" id="IPR049381">
    <property type="entry name" value="UbiD-like_C"/>
</dbReference>
<dbReference type="InterPro" id="IPR049383">
    <property type="entry name" value="UbiD-like_N"/>
</dbReference>
<dbReference type="InterPro" id="IPR023677">
    <property type="entry name" value="UbiD_bacteria"/>
</dbReference>
<dbReference type="InterPro" id="IPR048304">
    <property type="entry name" value="UbiD_Rift_dom"/>
</dbReference>
<dbReference type="NCBIfam" id="NF008175">
    <property type="entry name" value="PRK10922.1"/>
    <property type="match status" value="1"/>
</dbReference>
<dbReference type="NCBIfam" id="TIGR00148">
    <property type="entry name" value="UbiD family decarboxylase"/>
    <property type="match status" value="1"/>
</dbReference>
<dbReference type="PANTHER" id="PTHR30108">
    <property type="entry name" value="3-OCTAPRENYL-4-HYDROXYBENZOATE CARBOXY-LYASE-RELATED"/>
    <property type="match status" value="1"/>
</dbReference>
<dbReference type="PANTHER" id="PTHR30108:SF17">
    <property type="entry name" value="FERULIC ACID DECARBOXYLASE 1"/>
    <property type="match status" value="1"/>
</dbReference>
<dbReference type="Pfam" id="PF01977">
    <property type="entry name" value="UbiD"/>
    <property type="match status" value="1"/>
</dbReference>
<dbReference type="Pfam" id="PF20696">
    <property type="entry name" value="UbiD_C"/>
    <property type="match status" value="1"/>
</dbReference>
<dbReference type="Pfam" id="PF20695">
    <property type="entry name" value="UbiD_N"/>
    <property type="match status" value="1"/>
</dbReference>
<dbReference type="SUPFAM" id="SSF50475">
    <property type="entry name" value="FMN-binding split barrel"/>
    <property type="match status" value="1"/>
</dbReference>
<dbReference type="SUPFAM" id="SSF143968">
    <property type="entry name" value="UbiD C-terminal domain-like"/>
    <property type="match status" value="1"/>
</dbReference>
<feature type="chain" id="PRO_0000267671" description="3-octaprenyl-4-hydroxybenzoate carboxy-lyase">
    <location>
        <begin position="1"/>
        <end position="488"/>
    </location>
</feature>
<feature type="active site" description="Proton donor" evidence="1">
    <location>
        <position position="287"/>
    </location>
</feature>
<feature type="binding site" evidence="1">
    <location>
        <position position="172"/>
    </location>
    <ligand>
        <name>Mn(2+)</name>
        <dbReference type="ChEBI" id="CHEBI:29035"/>
    </ligand>
</feature>
<feature type="binding site" evidence="1">
    <location>
        <begin position="175"/>
        <end position="177"/>
    </location>
    <ligand>
        <name>prenylated FMN</name>
        <dbReference type="ChEBI" id="CHEBI:87746"/>
    </ligand>
</feature>
<feature type="binding site" evidence="1">
    <location>
        <begin position="189"/>
        <end position="191"/>
    </location>
    <ligand>
        <name>prenylated FMN</name>
        <dbReference type="ChEBI" id="CHEBI:87746"/>
    </ligand>
</feature>
<feature type="binding site" evidence="1">
    <location>
        <begin position="194"/>
        <end position="195"/>
    </location>
    <ligand>
        <name>prenylated FMN</name>
        <dbReference type="ChEBI" id="CHEBI:87746"/>
    </ligand>
</feature>
<feature type="binding site" evidence="1">
    <location>
        <position position="238"/>
    </location>
    <ligand>
        <name>Mn(2+)</name>
        <dbReference type="ChEBI" id="CHEBI:29035"/>
    </ligand>
</feature>
<evidence type="ECO:0000255" key="1">
    <source>
        <dbReference type="HAMAP-Rule" id="MF_01636"/>
    </source>
</evidence>
<organism>
    <name type="scientific">Legionella pneumophila subsp. pneumophila (strain Philadelphia 1 / ATCC 33152 / DSM 7513)</name>
    <dbReference type="NCBI Taxonomy" id="272624"/>
    <lineage>
        <taxon>Bacteria</taxon>
        <taxon>Pseudomonadati</taxon>
        <taxon>Pseudomonadota</taxon>
        <taxon>Gammaproteobacteria</taxon>
        <taxon>Legionellales</taxon>
        <taxon>Legionellaceae</taxon>
        <taxon>Legionella</taxon>
    </lineage>
</organism>
<reference key="1">
    <citation type="journal article" date="2004" name="Science">
        <title>The genomic sequence of the accidental pathogen Legionella pneumophila.</title>
        <authorList>
            <person name="Chien M."/>
            <person name="Morozova I."/>
            <person name="Shi S."/>
            <person name="Sheng H."/>
            <person name="Chen J."/>
            <person name="Gomez S.M."/>
            <person name="Asamani G."/>
            <person name="Hill K."/>
            <person name="Nuara J."/>
            <person name="Feder M."/>
            <person name="Rineer J."/>
            <person name="Greenberg J.J."/>
            <person name="Steshenko V."/>
            <person name="Park S.H."/>
            <person name="Zhao B."/>
            <person name="Teplitskaya E."/>
            <person name="Edwards J.R."/>
            <person name="Pampou S."/>
            <person name="Georghiou A."/>
            <person name="Chou I.-C."/>
            <person name="Iannuccilli W."/>
            <person name="Ulz M.E."/>
            <person name="Kim D.H."/>
            <person name="Geringer-Sameth A."/>
            <person name="Goldsberry C."/>
            <person name="Morozov P."/>
            <person name="Fischer S.G."/>
            <person name="Segal G."/>
            <person name="Qu X."/>
            <person name="Rzhetsky A."/>
            <person name="Zhang P."/>
            <person name="Cayanis E."/>
            <person name="De Jong P.J."/>
            <person name="Ju J."/>
            <person name="Kalachikov S."/>
            <person name="Shuman H.A."/>
            <person name="Russo J.J."/>
        </authorList>
    </citation>
    <scope>NUCLEOTIDE SEQUENCE [LARGE SCALE GENOMIC DNA]</scope>
    <source>
        <strain>Philadelphia 1 / ATCC 33152 / DSM 7513</strain>
    </source>
</reference>
<protein>
    <recommendedName>
        <fullName evidence="1">3-octaprenyl-4-hydroxybenzoate carboxy-lyase</fullName>
        <ecNumber evidence="1">4.1.1.98</ecNumber>
    </recommendedName>
    <alternativeName>
        <fullName evidence="1">Polyprenyl p-hydroxybenzoate decarboxylase</fullName>
    </alternativeName>
</protein>
<comment type="function">
    <text evidence="1">Catalyzes the decarboxylation of 3-octaprenyl-4-hydroxy benzoate to 2-octaprenylphenol, an intermediate step in ubiquinone biosynthesis.</text>
</comment>
<comment type="catalytic activity">
    <reaction evidence="1">
        <text>a 4-hydroxy-3-(all-trans-polyprenyl)benzoate + H(+) = a 2-(all-trans-polyprenyl)phenol + CO2</text>
        <dbReference type="Rhea" id="RHEA:41680"/>
        <dbReference type="Rhea" id="RHEA-COMP:9514"/>
        <dbReference type="Rhea" id="RHEA-COMP:9516"/>
        <dbReference type="ChEBI" id="CHEBI:1269"/>
        <dbReference type="ChEBI" id="CHEBI:15378"/>
        <dbReference type="ChEBI" id="CHEBI:16526"/>
        <dbReference type="ChEBI" id="CHEBI:78396"/>
        <dbReference type="EC" id="4.1.1.98"/>
    </reaction>
</comment>
<comment type="cofactor">
    <cofactor evidence="1">
        <name>prenylated FMN</name>
        <dbReference type="ChEBI" id="CHEBI:87746"/>
    </cofactor>
    <text evidence="1">Binds 1 prenylated FMN per subunit.</text>
</comment>
<comment type="cofactor">
    <cofactor evidence="1">
        <name>Mn(2+)</name>
        <dbReference type="ChEBI" id="CHEBI:29035"/>
    </cofactor>
</comment>
<comment type="pathway">
    <text evidence="1">Cofactor biosynthesis; ubiquinone biosynthesis.</text>
</comment>
<comment type="subunit">
    <text evidence="1">Homohexamer.</text>
</comment>
<comment type="subcellular location">
    <subcellularLocation>
        <location evidence="1">Cell membrane</location>
        <topology evidence="1">Peripheral membrane protein</topology>
    </subcellularLocation>
</comment>
<comment type="similarity">
    <text evidence="1">Belongs to the UbiD family.</text>
</comment>
<sequence length="488" mass="55040">MKYSDLRDFIAQLESRELLKRIDYPVSPHLEMTLVSDKVLRSGGPALLFTNTPNYNMPVLTNLFGTVERVALGMGEESIVALREIGKLLAALKEPDPPKGFKDAFSKLPLLKQALNMAPKYVSGAECQTHVWEKDEVDLTLLPIQTCWPGDVAPLITWGLVTTRGPHQSRENMGIYRQQLLSKNKLIMRWLSHRGGALDYQAWQQEYPKERFPVAVTLGADPATILAAVTPVPDTLSEYAFAGLLRGQRTRLTRCIGNDLHVPASAEIVLEGYLEPGNEAPEGPYGDHTGYYNEVQSFPVFTVERITHRDKPIYHSTYTGRPPDEPAILGVALNEVFIPLLQKQFPEIVDFYLPPEGCSYRLAVVTIKKQYPGHAKRIMMAVWSFLRQFMYTKFVIVCDDDVDARNWQDVIWAMTTRMDPSRDTVMVENTPIDYLDFASPVSGLGSKMGMDATSKWPGETQREWGKPITMDEDVLNRVNGYWSLLGLK</sequence>
<proteinExistence type="inferred from homology"/>
<keyword id="KW-1003">Cell membrane</keyword>
<keyword id="KW-0210">Decarboxylase</keyword>
<keyword id="KW-0285">Flavoprotein</keyword>
<keyword id="KW-0288">FMN</keyword>
<keyword id="KW-0456">Lyase</keyword>
<keyword id="KW-0464">Manganese</keyword>
<keyword id="KW-0472">Membrane</keyword>
<keyword id="KW-0479">Metal-binding</keyword>
<keyword id="KW-1185">Reference proteome</keyword>
<keyword id="KW-0831">Ubiquinone biosynthesis</keyword>
<accession>Q5ZRE9</accession>